<accession>Q6V9R5</accession>
<accession>Q32MN2</accession>
<accession>Q9NXS5</accession>
<proteinExistence type="evidence at protein level"/>
<name>ZN562_HUMAN</name>
<organism>
    <name type="scientific">Homo sapiens</name>
    <name type="common">Human</name>
    <dbReference type="NCBI Taxonomy" id="9606"/>
    <lineage>
        <taxon>Eukaryota</taxon>
        <taxon>Metazoa</taxon>
        <taxon>Chordata</taxon>
        <taxon>Craniata</taxon>
        <taxon>Vertebrata</taxon>
        <taxon>Euteleostomi</taxon>
        <taxon>Mammalia</taxon>
        <taxon>Eutheria</taxon>
        <taxon>Euarchontoglires</taxon>
        <taxon>Primates</taxon>
        <taxon>Haplorrhini</taxon>
        <taxon>Catarrhini</taxon>
        <taxon>Hominidae</taxon>
        <taxon>Homo</taxon>
    </lineage>
</organism>
<feature type="chain" id="PRO_0000047652" description="Zinc finger protein 562">
    <location>
        <begin position="1"/>
        <end position="426"/>
    </location>
</feature>
<feature type="domain" description="KRAB" evidence="2">
    <location>
        <begin position="41"/>
        <end position="120"/>
    </location>
</feature>
<feature type="zinc finger region" description="C2H2-type 1; degenerate" evidence="1">
    <location>
        <begin position="176"/>
        <end position="198"/>
    </location>
</feature>
<feature type="zinc finger region" description="C2H2-type 2" evidence="1">
    <location>
        <begin position="204"/>
        <end position="226"/>
    </location>
</feature>
<feature type="zinc finger region" description="C2H2-type 3; degenerate" evidence="1">
    <location>
        <begin position="260"/>
        <end position="282"/>
    </location>
</feature>
<feature type="zinc finger region" description="C2H2-type 4" evidence="1">
    <location>
        <begin position="288"/>
        <end position="310"/>
    </location>
</feature>
<feature type="zinc finger region" description="C2H2-type 5" evidence="1">
    <location>
        <begin position="316"/>
        <end position="338"/>
    </location>
</feature>
<feature type="zinc finger region" description="C2H2-type 6" evidence="1">
    <location>
        <begin position="344"/>
        <end position="366"/>
    </location>
</feature>
<feature type="zinc finger region" description="C2H2-type 7" evidence="1">
    <location>
        <begin position="372"/>
        <end position="394"/>
    </location>
</feature>
<feature type="zinc finger region" description="C2H2-type 8" evidence="1">
    <location>
        <begin position="400"/>
        <end position="422"/>
    </location>
</feature>
<feature type="splice variant" id="VSP_016379" description="In isoform 2." evidence="4">
    <location>
        <begin position="1"/>
        <end position="72"/>
    </location>
</feature>
<feature type="splice variant" id="VSP_016380" description="In isoform 2." evidence="4">
    <original>NYMNLASV</original>
    <variation>MSAFDMSH</variation>
    <location>
        <begin position="73"/>
        <end position="80"/>
    </location>
</feature>
<feature type="sequence variant" id="VAR_023936" description="In dbSNP:rs1163497365." evidence="3">
    <original>F</original>
    <variation>L</variation>
    <location>
        <position position="178"/>
    </location>
</feature>
<feature type="sequence variant" id="VAR_023937" description="In dbSNP:rs1059199." evidence="3">
    <original>K</original>
    <variation>E</variation>
    <location>
        <position position="205"/>
    </location>
</feature>
<feature type="sequence variant" id="VAR_059922" description="In dbSNP:rs1059199.">
    <original>E</original>
    <variation>K</variation>
    <location>
        <position position="260"/>
    </location>
</feature>
<feature type="sequence conflict" description="In Ref. 2; AAQ54330." evidence="5" ref="2">
    <original>C</original>
    <variation>Y</variation>
    <location>
        <position position="237"/>
    </location>
</feature>
<feature type="sequence conflict" description="In Ref. 2; AAQ54330." evidence="5" ref="2">
    <original>V</original>
    <variation>I</variation>
    <location>
        <position position="305"/>
    </location>
</feature>
<feature type="sequence conflict" description="In Ref. 1; BAA90935." evidence="5" ref="1">
    <original>K</original>
    <variation>R</variation>
    <location>
        <position position="379"/>
    </location>
</feature>
<dbReference type="EMBL" id="AK000086">
    <property type="protein sequence ID" value="BAA90935.1"/>
    <property type="molecule type" value="mRNA"/>
</dbReference>
<dbReference type="EMBL" id="AY346375">
    <property type="protein sequence ID" value="AAQ54330.1"/>
    <property type="molecule type" value="mRNA"/>
</dbReference>
<dbReference type="EMBL" id="CH471106">
    <property type="protein sequence ID" value="EAW84044.1"/>
    <property type="molecule type" value="Genomic_DNA"/>
</dbReference>
<dbReference type="EMBL" id="BC109062">
    <property type="protein sequence ID" value="AAI09063.2"/>
    <property type="molecule type" value="mRNA"/>
</dbReference>
<dbReference type="CCDS" id="CCDS12217.1">
    <molecule id="Q6V9R5-2"/>
</dbReference>
<dbReference type="CCDS" id="CCDS45956.1">
    <molecule id="Q6V9R5-1"/>
</dbReference>
<dbReference type="RefSeq" id="NP_001123503.1">
    <molecule id="Q6V9R5-1"/>
    <property type="nucleotide sequence ID" value="NM_001130031.2"/>
</dbReference>
<dbReference type="RefSeq" id="NP_001123504.1">
    <molecule id="Q6V9R5-1"/>
    <property type="nucleotide sequence ID" value="NM_001130032.2"/>
</dbReference>
<dbReference type="RefSeq" id="NP_001287814.1">
    <property type="nucleotide sequence ID" value="NM_001300885.1"/>
</dbReference>
<dbReference type="RefSeq" id="NP_060126.2">
    <molecule id="Q6V9R5-2"/>
    <property type="nucleotide sequence ID" value="NM_017656.4"/>
</dbReference>
<dbReference type="RefSeq" id="XP_005259998.1">
    <property type="nucleotide sequence ID" value="XM_005259941.3"/>
</dbReference>
<dbReference type="SMR" id="Q6V9R5"/>
<dbReference type="BioGRID" id="120168">
    <property type="interactions" value="21"/>
</dbReference>
<dbReference type="FunCoup" id="Q6V9R5">
    <property type="interactions" value="153"/>
</dbReference>
<dbReference type="IntAct" id="Q6V9R5">
    <property type="interactions" value="15"/>
</dbReference>
<dbReference type="STRING" id="9606.ENSP00000410734"/>
<dbReference type="iPTMnet" id="Q6V9R5"/>
<dbReference type="PhosphoSitePlus" id="Q6V9R5"/>
<dbReference type="BioMuta" id="ZNF562"/>
<dbReference type="DMDM" id="146291105"/>
<dbReference type="jPOST" id="Q6V9R5"/>
<dbReference type="MassIVE" id="Q6V9R5"/>
<dbReference type="PaxDb" id="9606-ENSP00000410734"/>
<dbReference type="PeptideAtlas" id="Q6V9R5"/>
<dbReference type="ProteomicsDB" id="67719">
    <molecule id="Q6V9R5-1"/>
</dbReference>
<dbReference type="ProteomicsDB" id="67720">
    <molecule id="Q6V9R5-2"/>
</dbReference>
<dbReference type="Pumba" id="Q6V9R5"/>
<dbReference type="Antibodypedia" id="25073">
    <property type="antibodies" value="118 antibodies from 19 providers"/>
</dbReference>
<dbReference type="DNASU" id="54811"/>
<dbReference type="Ensembl" id="ENST00000293648.8">
    <molecule id="Q6V9R5-2"/>
    <property type="protein sequence ID" value="ENSP00000293648.3"/>
    <property type="gene ID" value="ENSG00000171466.10"/>
</dbReference>
<dbReference type="Ensembl" id="ENST00000453372.7">
    <molecule id="Q6V9R5-1"/>
    <property type="protein sequence ID" value="ENSP00000410734.1"/>
    <property type="gene ID" value="ENSG00000171466.10"/>
</dbReference>
<dbReference type="GeneID" id="54811"/>
<dbReference type="KEGG" id="hsa:54811"/>
<dbReference type="MANE-Select" id="ENST00000453372.7">
    <property type="protein sequence ID" value="ENSP00000410734.1"/>
    <property type="RefSeq nucleotide sequence ID" value="NM_001130031.2"/>
    <property type="RefSeq protein sequence ID" value="NP_001123503.1"/>
</dbReference>
<dbReference type="UCSC" id="uc002mlx.4">
    <molecule id="Q6V9R5-1"/>
    <property type="organism name" value="human"/>
</dbReference>
<dbReference type="AGR" id="HGNC:25950"/>
<dbReference type="CTD" id="54811"/>
<dbReference type="GeneCards" id="ZNF562"/>
<dbReference type="HGNC" id="HGNC:25950">
    <property type="gene designation" value="ZNF562"/>
</dbReference>
<dbReference type="HPA" id="ENSG00000171466">
    <property type="expression patterns" value="Low tissue specificity"/>
</dbReference>
<dbReference type="neXtProt" id="NX_Q6V9R5"/>
<dbReference type="OpenTargets" id="ENSG00000171466"/>
<dbReference type="PharmGKB" id="PA134941707"/>
<dbReference type="VEuPathDB" id="HostDB:ENSG00000171466"/>
<dbReference type="eggNOG" id="KOG1721">
    <property type="taxonomic scope" value="Eukaryota"/>
</dbReference>
<dbReference type="GeneTree" id="ENSGT00940000162984"/>
<dbReference type="HOGENOM" id="CLU_002678_2_2_1"/>
<dbReference type="InParanoid" id="Q6V9R5"/>
<dbReference type="OMA" id="PFVCKEF"/>
<dbReference type="OrthoDB" id="6077919at2759"/>
<dbReference type="PAN-GO" id="Q6V9R5">
    <property type="GO annotations" value="3 GO annotations based on evolutionary models"/>
</dbReference>
<dbReference type="PhylomeDB" id="Q6V9R5"/>
<dbReference type="TreeFam" id="TF341966"/>
<dbReference type="PathwayCommons" id="Q6V9R5"/>
<dbReference type="Reactome" id="R-HSA-212436">
    <property type="pathway name" value="Generic Transcription Pathway"/>
</dbReference>
<dbReference type="SignaLink" id="Q6V9R5"/>
<dbReference type="BioGRID-ORCS" id="54811">
    <property type="hits" value="14 hits in 1173 CRISPR screens"/>
</dbReference>
<dbReference type="ChiTaRS" id="ZNF562">
    <property type="organism name" value="human"/>
</dbReference>
<dbReference type="GenomeRNAi" id="54811"/>
<dbReference type="Pharos" id="Q6V9R5">
    <property type="development level" value="Tdark"/>
</dbReference>
<dbReference type="PRO" id="PR:Q6V9R5"/>
<dbReference type="Proteomes" id="UP000005640">
    <property type="component" value="Chromosome 19"/>
</dbReference>
<dbReference type="RNAct" id="Q6V9R5">
    <property type="molecule type" value="protein"/>
</dbReference>
<dbReference type="Bgee" id="ENSG00000171466">
    <property type="expression patterns" value="Expressed in buccal mucosa cell and 203 other cell types or tissues"/>
</dbReference>
<dbReference type="ExpressionAtlas" id="Q6V9R5">
    <property type="expression patterns" value="baseline and differential"/>
</dbReference>
<dbReference type="GO" id="GO:0005634">
    <property type="term" value="C:nucleus"/>
    <property type="evidence" value="ECO:0007669"/>
    <property type="project" value="UniProtKB-SubCell"/>
</dbReference>
<dbReference type="GO" id="GO:0000981">
    <property type="term" value="F:DNA-binding transcription factor activity, RNA polymerase II-specific"/>
    <property type="evidence" value="ECO:0000318"/>
    <property type="project" value="GO_Central"/>
</dbReference>
<dbReference type="GO" id="GO:0000978">
    <property type="term" value="F:RNA polymerase II cis-regulatory region sequence-specific DNA binding"/>
    <property type="evidence" value="ECO:0000318"/>
    <property type="project" value="GO_Central"/>
</dbReference>
<dbReference type="GO" id="GO:0008270">
    <property type="term" value="F:zinc ion binding"/>
    <property type="evidence" value="ECO:0007669"/>
    <property type="project" value="UniProtKB-KW"/>
</dbReference>
<dbReference type="GO" id="GO:0006355">
    <property type="term" value="P:regulation of DNA-templated transcription"/>
    <property type="evidence" value="ECO:0000318"/>
    <property type="project" value="GO_Central"/>
</dbReference>
<dbReference type="CDD" id="cd07765">
    <property type="entry name" value="KRAB_A-box"/>
    <property type="match status" value="1"/>
</dbReference>
<dbReference type="FunFam" id="3.30.160.60:FF:000650">
    <property type="entry name" value="Zinc finger protein 197"/>
    <property type="match status" value="1"/>
</dbReference>
<dbReference type="FunFam" id="3.30.160.60:FF:002254">
    <property type="entry name" value="Zinc finger protein 540"/>
    <property type="match status" value="1"/>
</dbReference>
<dbReference type="FunFam" id="3.30.160.60:FF:003432">
    <property type="entry name" value="Zinc finger protein 561"/>
    <property type="match status" value="1"/>
</dbReference>
<dbReference type="FunFam" id="3.30.160.60:FF:001116">
    <property type="entry name" value="Zinc finger protein 562"/>
    <property type="match status" value="2"/>
</dbReference>
<dbReference type="FunFam" id="3.30.160.60:FF:001157">
    <property type="entry name" value="Zinc finger protein 793"/>
    <property type="match status" value="1"/>
</dbReference>
<dbReference type="Gene3D" id="6.10.140.140">
    <property type="match status" value="1"/>
</dbReference>
<dbReference type="Gene3D" id="3.30.160.60">
    <property type="entry name" value="Classic Zinc Finger"/>
    <property type="match status" value="8"/>
</dbReference>
<dbReference type="InterPro" id="IPR001909">
    <property type="entry name" value="KRAB"/>
</dbReference>
<dbReference type="InterPro" id="IPR036051">
    <property type="entry name" value="KRAB_dom_sf"/>
</dbReference>
<dbReference type="InterPro" id="IPR036236">
    <property type="entry name" value="Znf_C2H2_sf"/>
</dbReference>
<dbReference type="InterPro" id="IPR013087">
    <property type="entry name" value="Znf_C2H2_type"/>
</dbReference>
<dbReference type="PANTHER" id="PTHR23235:SF178">
    <property type="entry name" value="C2H2-TYPE DOMAIN-CONTAINING PROTEIN-RELATED"/>
    <property type="match status" value="1"/>
</dbReference>
<dbReference type="PANTHER" id="PTHR23235">
    <property type="entry name" value="KRUEPPEL-LIKE TRANSCRIPTION FACTOR"/>
    <property type="match status" value="1"/>
</dbReference>
<dbReference type="Pfam" id="PF01352">
    <property type="entry name" value="KRAB"/>
    <property type="match status" value="1"/>
</dbReference>
<dbReference type="Pfam" id="PF00096">
    <property type="entry name" value="zf-C2H2"/>
    <property type="match status" value="8"/>
</dbReference>
<dbReference type="SMART" id="SM00349">
    <property type="entry name" value="KRAB"/>
    <property type="match status" value="1"/>
</dbReference>
<dbReference type="SMART" id="SM00355">
    <property type="entry name" value="ZnF_C2H2"/>
    <property type="match status" value="8"/>
</dbReference>
<dbReference type="SUPFAM" id="SSF57667">
    <property type="entry name" value="beta-beta-alpha zinc fingers"/>
    <property type="match status" value="5"/>
</dbReference>
<dbReference type="SUPFAM" id="SSF109640">
    <property type="entry name" value="KRAB domain (Kruppel-associated box)"/>
    <property type="match status" value="1"/>
</dbReference>
<dbReference type="PROSITE" id="PS50805">
    <property type="entry name" value="KRAB"/>
    <property type="match status" value="1"/>
</dbReference>
<dbReference type="PROSITE" id="PS00028">
    <property type="entry name" value="ZINC_FINGER_C2H2_1"/>
    <property type="match status" value="6"/>
</dbReference>
<dbReference type="PROSITE" id="PS50157">
    <property type="entry name" value="ZINC_FINGER_C2H2_2"/>
    <property type="match status" value="9"/>
</dbReference>
<protein>
    <recommendedName>
        <fullName>Zinc finger protein 562</fullName>
    </recommendedName>
</protein>
<reference key="1">
    <citation type="journal article" date="2004" name="Nat. Genet.">
        <title>Complete sequencing and characterization of 21,243 full-length human cDNAs.</title>
        <authorList>
            <person name="Ota T."/>
            <person name="Suzuki Y."/>
            <person name="Nishikawa T."/>
            <person name="Otsuki T."/>
            <person name="Sugiyama T."/>
            <person name="Irie R."/>
            <person name="Wakamatsu A."/>
            <person name="Hayashi K."/>
            <person name="Sato H."/>
            <person name="Nagai K."/>
            <person name="Kimura K."/>
            <person name="Makita H."/>
            <person name="Sekine M."/>
            <person name="Obayashi M."/>
            <person name="Nishi T."/>
            <person name="Shibahara T."/>
            <person name="Tanaka T."/>
            <person name="Ishii S."/>
            <person name="Yamamoto J."/>
            <person name="Saito K."/>
            <person name="Kawai Y."/>
            <person name="Isono Y."/>
            <person name="Nakamura Y."/>
            <person name="Nagahari K."/>
            <person name="Murakami K."/>
            <person name="Yasuda T."/>
            <person name="Iwayanagi T."/>
            <person name="Wagatsuma M."/>
            <person name="Shiratori A."/>
            <person name="Sudo H."/>
            <person name="Hosoiri T."/>
            <person name="Kaku Y."/>
            <person name="Kodaira H."/>
            <person name="Kondo H."/>
            <person name="Sugawara M."/>
            <person name="Takahashi M."/>
            <person name="Kanda K."/>
            <person name="Yokoi T."/>
            <person name="Furuya T."/>
            <person name="Kikkawa E."/>
            <person name="Omura Y."/>
            <person name="Abe K."/>
            <person name="Kamihara K."/>
            <person name="Katsuta N."/>
            <person name="Sato K."/>
            <person name="Tanikawa M."/>
            <person name="Yamazaki M."/>
            <person name="Ninomiya K."/>
            <person name="Ishibashi T."/>
            <person name="Yamashita H."/>
            <person name="Murakawa K."/>
            <person name="Fujimori K."/>
            <person name="Tanai H."/>
            <person name="Kimata M."/>
            <person name="Watanabe M."/>
            <person name="Hiraoka S."/>
            <person name="Chiba Y."/>
            <person name="Ishida S."/>
            <person name="Ono Y."/>
            <person name="Takiguchi S."/>
            <person name="Watanabe S."/>
            <person name="Yosida M."/>
            <person name="Hotuta T."/>
            <person name="Kusano J."/>
            <person name="Kanehori K."/>
            <person name="Takahashi-Fujii A."/>
            <person name="Hara H."/>
            <person name="Tanase T.-O."/>
            <person name="Nomura Y."/>
            <person name="Togiya S."/>
            <person name="Komai F."/>
            <person name="Hara R."/>
            <person name="Takeuchi K."/>
            <person name="Arita M."/>
            <person name="Imose N."/>
            <person name="Musashino K."/>
            <person name="Yuuki H."/>
            <person name="Oshima A."/>
            <person name="Sasaki N."/>
            <person name="Aotsuka S."/>
            <person name="Yoshikawa Y."/>
            <person name="Matsunawa H."/>
            <person name="Ichihara T."/>
            <person name="Shiohata N."/>
            <person name="Sano S."/>
            <person name="Moriya S."/>
            <person name="Momiyama H."/>
            <person name="Satoh N."/>
            <person name="Takami S."/>
            <person name="Terashima Y."/>
            <person name="Suzuki O."/>
            <person name="Nakagawa S."/>
            <person name="Senoh A."/>
            <person name="Mizoguchi H."/>
            <person name="Goto Y."/>
            <person name="Shimizu F."/>
            <person name="Wakebe H."/>
            <person name="Hishigaki H."/>
            <person name="Watanabe T."/>
            <person name="Sugiyama A."/>
            <person name="Takemoto M."/>
            <person name="Kawakami B."/>
            <person name="Yamazaki M."/>
            <person name="Watanabe K."/>
            <person name="Kumagai A."/>
            <person name="Itakura S."/>
            <person name="Fukuzumi Y."/>
            <person name="Fujimori Y."/>
            <person name="Komiyama M."/>
            <person name="Tashiro H."/>
            <person name="Tanigami A."/>
            <person name="Fujiwara T."/>
            <person name="Ono T."/>
            <person name="Yamada K."/>
            <person name="Fujii Y."/>
            <person name="Ozaki K."/>
            <person name="Hirao M."/>
            <person name="Ohmori Y."/>
            <person name="Kawabata A."/>
            <person name="Hikiji T."/>
            <person name="Kobatake N."/>
            <person name="Inagaki H."/>
            <person name="Ikema Y."/>
            <person name="Okamoto S."/>
            <person name="Okitani R."/>
            <person name="Kawakami T."/>
            <person name="Noguchi S."/>
            <person name="Itoh T."/>
            <person name="Shigeta K."/>
            <person name="Senba T."/>
            <person name="Matsumura K."/>
            <person name="Nakajima Y."/>
            <person name="Mizuno T."/>
            <person name="Morinaga M."/>
            <person name="Sasaki M."/>
            <person name="Togashi T."/>
            <person name="Oyama M."/>
            <person name="Hata H."/>
            <person name="Watanabe M."/>
            <person name="Komatsu T."/>
            <person name="Mizushima-Sugano J."/>
            <person name="Satoh T."/>
            <person name="Shirai Y."/>
            <person name="Takahashi Y."/>
            <person name="Nakagawa K."/>
            <person name="Okumura K."/>
            <person name="Nagase T."/>
            <person name="Nomura N."/>
            <person name="Kikuchi H."/>
            <person name="Masuho Y."/>
            <person name="Yamashita R."/>
            <person name="Nakai K."/>
            <person name="Yada T."/>
            <person name="Nakamura Y."/>
            <person name="Ohara O."/>
            <person name="Isogai T."/>
            <person name="Sugano S."/>
        </authorList>
    </citation>
    <scope>NUCLEOTIDE SEQUENCE [LARGE SCALE MRNA] (ISOFORM 2)</scope>
    <scope>VARIANTS LEU-178 AND GLU-205</scope>
    <source>
        <tissue>Colon</tissue>
    </source>
</reference>
<reference key="2">
    <citation type="submission" date="2003-07" db="EMBL/GenBank/DDBJ databases">
        <authorList>
            <person name="Zhou G."/>
            <person name="Yu R."/>
            <person name="Cao L."/>
            <person name="Ke R."/>
            <person name="Li H."/>
            <person name="Shen C."/>
            <person name="Zhong G."/>
            <person name="Lin L."/>
            <person name="Yang S."/>
        </authorList>
    </citation>
    <scope>NUCLEOTIDE SEQUENCE [LARGE SCALE MRNA] (ISOFORM 1)</scope>
</reference>
<reference key="3">
    <citation type="submission" date="2005-07" db="EMBL/GenBank/DDBJ databases">
        <authorList>
            <person name="Mural R.J."/>
            <person name="Istrail S."/>
            <person name="Sutton G.G."/>
            <person name="Florea L."/>
            <person name="Halpern A.L."/>
            <person name="Mobarry C.M."/>
            <person name="Lippert R."/>
            <person name="Walenz B."/>
            <person name="Shatkay H."/>
            <person name="Dew I."/>
            <person name="Miller J.R."/>
            <person name="Flanigan M.J."/>
            <person name="Edwards N.J."/>
            <person name="Bolanos R."/>
            <person name="Fasulo D."/>
            <person name="Halldorsson B.V."/>
            <person name="Hannenhalli S."/>
            <person name="Turner R."/>
            <person name="Yooseph S."/>
            <person name="Lu F."/>
            <person name="Nusskern D.R."/>
            <person name="Shue B.C."/>
            <person name="Zheng X.H."/>
            <person name="Zhong F."/>
            <person name="Delcher A.L."/>
            <person name="Huson D.H."/>
            <person name="Kravitz S.A."/>
            <person name="Mouchard L."/>
            <person name="Reinert K."/>
            <person name="Remington K.A."/>
            <person name="Clark A.G."/>
            <person name="Waterman M.S."/>
            <person name="Eichler E.E."/>
            <person name="Adams M.D."/>
            <person name="Hunkapiller M.W."/>
            <person name="Myers E.W."/>
            <person name="Venter J.C."/>
        </authorList>
    </citation>
    <scope>NUCLEOTIDE SEQUENCE [LARGE SCALE GENOMIC DNA]</scope>
</reference>
<reference key="4">
    <citation type="journal article" date="2004" name="Genome Res.">
        <title>The status, quality, and expansion of the NIH full-length cDNA project: the Mammalian Gene Collection (MGC).</title>
        <authorList>
            <consortium name="The MGC Project Team"/>
        </authorList>
    </citation>
    <scope>NUCLEOTIDE SEQUENCE [LARGE SCALE MRNA] (ISOFORM 1)</scope>
</reference>
<comment type="function">
    <text>May be involved in transcriptional regulation.</text>
</comment>
<comment type="subcellular location">
    <subcellularLocation>
        <location evidence="5">Nucleus</location>
    </subcellularLocation>
</comment>
<comment type="alternative products">
    <event type="alternative splicing"/>
    <isoform>
        <id>Q6V9R5-1</id>
        <name>1</name>
        <sequence type="displayed"/>
    </isoform>
    <isoform>
        <id>Q6V9R5-2</id>
        <name>2</name>
        <sequence type="described" ref="VSP_016379 VSP_016380"/>
    </isoform>
</comment>
<comment type="similarity">
    <text evidence="5">Belongs to the krueppel C2H2-type zinc-finger protein family.</text>
</comment>
<evidence type="ECO:0000255" key="1">
    <source>
        <dbReference type="PROSITE-ProRule" id="PRU00042"/>
    </source>
</evidence>
<evidence type="ECO:0000255" key="2">
    <source>
        <dbReference type="PROSITE-ProRule" id="PRU00119"/>
    </source>
</evidence>
<evidence type="ECO:0000269" key="3">
    <source>
    </source>
</evidence>
<evidence type="ECO:0000303" key="4">
    <source>
    </source>
</evidence>
<evidence type="ECO:0000305" key="5"/>
<sequence>MSAFDMSHGFFPREPICPFEEKTKIGTMVEDHRSNSYQDSVTFDDVAVEFTPEEWALLDTTQKYLYRDVMLENYMNLASVDFFFCLTSEWEIQPRTKRSSLQQGFLKNQIFTGIQMQTRSYSGWKLCENCGEVFSEQFCLKTHMRAQNGGNTFEGNCYGKDSISVHKEASIGQELSKFNPCGKVFTLTPGLAVHLEILNGRQPYKCKECGKGFKYFASLDNHMGIHIGEKLCEFQECERAITTSSHLKQCVAVHTGKKSEKTKNCGKSFTNFSQLSAHAKTHKGEKSFECKECGRSFRNSSSFNVHIQIHTGIKPHKCTECGKAFTRSTHLTQHVRTHTGIKPYECKECGQAFTQYTGLAIHIRNHTGEKPYQCKECGKAFNRSSTLTQHRRIHTGEKPYECVECGKTFITSSHRSKHLKTHSGER</sequence>
<gene>
    <name type="primary">ZNF562</name>
</gene>
<keyword id="KW-0025">Alternative splicing</keyword>
<keyword id="KW-0238">DNA-binding</keyword>
<keyword id="KW-0479">Metal-binding</keyword>
<keyword id="KW-0539">Nucleus</keyword>
<keyword id="KW-1267">Proteomics identification</keyword>
<keyword id="KW-1185">Reference proteome</keyword>
<keyword id="KW-0677">Repeat</keyword>
<keyword id="KW-0804">Transcription</keyword>
<keyword id="KW-0805">Transcription regulation</keyword>
<keyword id="KW-0862">Zinc</keyword>
<keyword id="KW-0863">Zinc-finger</keyword>